<comment type="function">
    <text evidence="1">NDH shuttles electrons from NAD(P)H:plastoquinone, via FMN and iron-sulfur (Fe-S) centers, to quinones in the photosynthetic chain and possibly in a chloroplast respiratory chain. The immediate electron acceptor for the enzyme in this species is believed to be plastoquinone. Couples the redox reaction to proton translocation, and thus conserves the redox energy in a proton gradient.</text>
</comment>
<comment type="catalytic activity">
    <reaction evidence="1">
        <text>a plastoquinone + NADH + (n+1) H(+)(in) = a plastoquinol + NAD(+) + n H(+)(out)</text>
        <dbReference type="Rhea" id="RHEA:42608"/>
        <dbReference type="Rhea" id="RHEA-COMP:9561"/>
        <dbReference type="Rhea" id="RHEA-COMP:9562"/>
        <dbReference type="ChEBI" id="CHEBI:15378"/>
        <dbReference type="ChEBI" id="CHEBI:17757"/>
        <dbReference type="ChEBI" id="CHEBI:57540"/>
        <dbReference type="ChEBI" id="CHEBI:57945"/>
        <dbReference type="ChEBI" id="CHEBI:62192"/>
    </reaction>
</comment>
<comment type="catalytic activity">
    <reaction evidence="1">
        <text>a plastoquinone + NADPH + (n+1) H(+)(in) = a plastoquinol + NADP(+) + n H(+)(out)</text>
        <dbReference type="Rhea" id="RHEA:42612"/>
        <dbReference type="Rhea" id="RHEA-COMP:9561"/>
        <dbReference type="Rhea" id="RHEA-COMP:9562"/>
        <dbReference type="ChEBI" id="CHEBI:15378"/>
        <dbReference type="ChEBI" id="CHEBI:17757"/>
        <dbReference type="ChEBI" id="CHEBI:57783"/>
        <dbReference type="ChEBI" id="CHEBI:58349"/>
        <dbReference type="ChEBI" id="CHEBI:62192"/>
    </reaction>
</comment>
<comment type="subunit">
    <text evidence="1">NDH is composed of at least 16 different subunits, 5 of which are encoded in the nucleus.</text>
</comment>
<comment type="subcellular location">
    <subcellularLocation>
        <location evidence="1">Plastid</location>
        <location evidence="1">Chloroplast thylakoid membrane</location>
        <topology evidence="1">Multi-pass membrane protein</topology>
    </subcellularLocation>
</comment>
<comment type="similarity">
    <text evidence="1">Belongs to the complex I subunit 2 family.</text>
</comment>
<gene>
    <name evidence="1" type="primary">ndhB2</name>
</gene>
<organism>
    <name type="scientific">Piper cenocladum</name>
    <name type="common">Ant piper</name>
    <dbReference type="NCBI Taxonomy" id="398741"/>
    <lineage>
        <taxon>Eukaryota</taxon>
        <taxon>Viridiplantae</taxon>
        <taxon>Streptophyta</taxon>
        <taxon>Embryophyta</taxon>
        <taxon>Tracheophyta</taxon>
        <taxon>Spermatophyta</taxon>
        <taxon>Magnoliopsida</taxon>
        <taxon>Magnoliidae</taxon>
        <taxon>Piperales</taxon>
        <taxon>Piperaceae</taxon>
        <taxon>Piper</taxon>
    </lineage>
</organism>
<sequence length="510" mass="56873">MIWHVQNENFILDSTRIFMKAFHLLLFHGSFIFPECILIFGLILLLMIDSTSDQKDIPWLYFISSTSLVMSITALLFRWREEPMISFSGNFQTNNFNEIFQFLILLCSTLCIPLSVEYIECTEMAITEFLLFVLTATLGGMFLCGANDLITIFVAPECFSLCSYLLSGYTKRDVRSNEATTKYLLMGGASSSILVHGFSWLYGSSGGEIELQEIVNGLINTQMYNSPGISIALIFITVGIGFKLSPAPFHQWTPDVYEGSPTPVVAFLSVTSKVAASASATRIFDIPFYFSSNEWHLLLEILAILSMILGNLIAITQTSMKRMLAYSSIGQIGYVIIGIIVGDSNDGYASMITYMLFYISMNLGTFACIVLFGLRTGTDNIRDYAGLYTKDPFLALSSALCLLSLGGLPPLAGFFGKLYLFWCGWQAGLYFLVSIGLLMSVVSIYYYLKIIKLLMTGRNQEITPHMRNYRRYPLRSNNSIELSMILCVIASTIPGISMNPIIAIAQDTLF</sequence>
<protein>
    <recommendedName>
        <fullName evidence="1">NAD(P)H-quinone oxidoreductase subunit 2 B, chloroplastic</fullName>
        <ecNumber evidence="1">7.1.1.-</ecNumber>
    </recommendedName>
    <alternativeName>
        <fullName evidence="1">NAD(P)H dehydrogenase, subunit 2 B</fullName>
    </alternativeName>
    <alternativeName>
        <fullName evidence="1">NADH-plastoquinone oxidoreductase subunit 2 B</fullName>
    </alternativeName>
</protein>
<name>NU2C2_PIPCE</name>
<dbReference type="EC" id="7.1.1.-" evidence="1"/>
<dbReference type="EMBL" id="DQ887677">
    <property type="protein sequence ID" value="ABI14532.1"/>
    <property type="molecule type" value="Genomic_DNA"/>
</dbReference>
<dbReference type="SMR" id="P0CD31"/>
<dbReference type="GO" id="GO:0009535">
    <property type="term" value="C:chloroplast thylakoid membrane"/>
    <property type="evidence" value="ECO:0007669"/>
    <property type="project" value="UniProtKB-SubCell"/>
</dbReference>
<dbReference type="GO" id="GO:0008137">
    <property type="term" value="F:NADH dehydrogenase (ubiquinone) activity"/>
    <property type="evidence" value="ECO:0007669"/>
    <property type="project" value="InterPro"/>
</dbReference>
<dbReference type="GO" id="GO:0048038">
    <property type="term" value="F:quinone binding"/>
    <property type="evidence" value="ECO:0007669"/>
    <property type="project" value="UniProtKB-KW"/>
</dbReference>
<dbReference type="GO" id="GO:0042773">
    <property type="term" value="P:ATP synthesis coupled electron transport"/>
    <property type="evidence" value="ECO:0007669"/>
    <property type="project" value="InterPro"/>
</dbReference>
<dbReference type="GO" id="GO:0019684">
    <property type="term" value="P:photosynthesis, light reaction"/>
    <property type="evidence" value="ECO:0007669"/>
    <property type="project" value="UniProtKB-UniRule"/>
</dbReference>
<dbReference type="HAMAP" id="MF_00445">
    <property type="entry name" value="NDH1_NuoN_1"/>
    <property type="match status" value="1"/>
</dbReference>
<dbReference type="InterPro" id="IPR010096">
    <property type="entry name" value="NADH-Q_OxRdtase_suN/2"/>
</dbReference>
<dbReference type="InterPro" id="IPR001750">
    <property type="entry name" value="ND/Mrp_TM"/>
</dbReference>
<dbReference type="InterPro" id="IPR045693">
    <property type="entry name" value="Ndh2_N"/>
</dbReference>
<dbReference type="NCBIfam" id="TIGR01770">
    <property type="entry name" value="NDH_I_N"/>
    <property type="match status" value="1"/>
</dbReference>
<dbReference type="NCBIfam" id="NF002701">
    <property type="entry name" value="PRK02504.1"/>
    <property type="match status" value="1"/>
</dbReference>
<dbReference type="PANTHER" id="PTHR22773">
    <property type="entry name" value="NADH DEHYDROGENASE"/>
    <property type="match status" value="1"/>
</dbReference>
<dbReference type="Pfam" id="PF19530">
    <property type="entry name" value="Ndh2_N"/>
    <property type="match status" value="1"/>
</dbReference>
<dbReference type="Pfam" id="PF00361">
    <property type="entry name" value="Proton_antipo_M"/>
    <property type="match status" value="1"/>
</dbReference>
<evidence type="ECO:0000255" key="1">
    <source>
        <dbReference type="HAMAP-Rule" id="MF_00445"/>
    </source>
</evidence>
<keyword id="KW-0150">Chloroplast</keyword>
<keyword id="KW-0472">Membrane</keyword>
<keyword id="KW-0520">NAD</keyword>
<keyword id="KW-0521">NADP</keyword>
<keyword id="KW-0934">Plastid</keyword>
<keyword id="KW-0618">Plastoquinone</keyword>
<keyword id="KW-0874">Quinone</keyword>
<keyword id="KW-0793">Thylakoid</keyword>
<keyword id="KW-1278">Translocase</keyword>
<keyword id="KW-0812">Transmembrane</keyword>
<keyword id="KW-1133">Transmembrane helix</keyword>
<keyword id="KW-0813">Transport</keyword>
<feature type="chain" id="PRO_0000391303" description="NAD(P)H-quinone oxidoreductase subunit 2 B, chloroplastic">
    <location>
        <begin position="1"/>
        <end position="510"/>
    </location>
</feature>
<feature type="transmembrane region" description="Helical" evidence="1">
    <location>
        <begin position="24"/>
        <end position="44"/>
    </location>
</feature>
<feature type="transmembrane region" description="Helical" evidence="1">
    <location>
        <begin position="57"/>
        <end position="77"/>
    </location>
</feature>
<feature type="transmembrane region" description="Helical" evidence="1">
    <location>
        <begin position="99"/>
        <end position="119"/>
    </location>
</feature>
<feature type="transmembrane region" description="Helical" evidence="1">
    <location>
        <begin position="124"/>
        <end position="144"/>
    </location>
</feature>
<feature type="transmembrane region" description="Helical" evidence="1">
    <location>
        <begin position="149"/>
        <end position="169"/>
    </location>
</feature>
<feature type="transmembrane region" description="Helical" evidence="1">
    <location>
        <begin position="183"/>
        <end position="203"/>
    </location>
</feature>
<feature type="transmembrane region" description="Helical" evidence="1">
    <location>
        <begin position="229"/>
        <end position="249"/>
    </location>
</feature>
<feature type="transmembrane region" description="Helical" evidence="1">
    <location>
        <begin position="295"/>
        <end position="315"/>
    </location>
</feature>
<feature type="transmembrane region" description="Helical" evidence="1">
    <location>
        <begin position="323"/>
        <end position="343"/>
    </location>
</feature>
<feature type="transmembrane region" description="Helical" evidence="1">
    <location>
        <begin position="354"/>
        <end position="374"/>
    </location>
</feature>
<feature type="transmembrane region" description="Helical" evidence="1">
    <location>
        <begin position="395"/>
        <end position="415"/>
    </location>
</feature>
<feature type="transmembrane region" description="Helical" evidence="1">
    <location>
        <begin position="418"/>
        <end position="438"/>
    </location>
</feature>
<feature type="transmembrane region" description="Helical" evidence="1">
    <location>
        <begin position="484"/>
        <end position="504"/>
    </location>
</feature>
<geneLocation type="chloroplast"/>
<proteinExistence type="inferred from homology"/>
<reference key="1">
    <citation type="journal article" date="2006" name="BMC Evol. Biol.">
        <title>Complete plastid genome sequences of Drimys, Liriodendron, and Piper: implications for the phylogenetic relationships of magnoliids.</title>
        <authorList>
            <person name="Cai Z."/>
            <person name="Penaflor C."/>
            <person name="Kuehl J.V."/>
            <person name="Leebens-Mack J."/>
            <person name="Carlson J.E."/>
            <person name="dePamphilis C.W."/>
            <person name="Boore J.L."/>
            <person name="Jansen R.K."/>
        </authorList>
    </citation>
    <scope>NUCLEOTIDE SEQUENCE [LARGE SCALE GENOMIC DNA]</scope>
</reference>
<accession>P0CD31</accession>
<accession>Q06GJ9</accession>